<keyword id="KW-0025">Alternative splicing</keyword>
<keyword id="KW-0175">Coiled coil</keyword>
<keyword id="KW-0539">Nucleus</keyword>
<keyword id="KW-1185">Reference proteome</keyword>
<keyword id="KW-0677">Repeat</keyword>
<keyword id="KW-0802">TPR repeat</keyword>
<comment type="function">
    <text evidence="1 4">Component of the PAF1 complex which is a multifunctional complex involved in transcription initiation via genetic interactions with TATA-binding proteins, elongation and transcription-coupled histone modification (By similarity). Ctr-9 is required for epidermal microtubule organization during morphogenesis (PubMed:24721716).</text>
</comment>
<comment type="subunit">
    <text evidence="1">Component of the PAF1 complex which consists of at least cdc-73, ctr-9, leo-1, pafo-1 and rtfo-1.</text>
</comment>
<comment type="subcellular location">
    <subcellularLocation>
        <location evidence="4">Nucleus</location>
    </subcellularLocation>
</comment>
<comment type="alternative products">
    <event type="alternative splicing"/>
    <isoform>
        <id>Q03560-1</id>
        <name evidence="6">a</name>
        <sequence type="displayed"/>
    </isoform>
    <isoform>
        <id>Q03560-4</id>
        <name evidence="7">d</name>
        <sequence type="described" ref="VSP_057316 VSP_057317"/>
    </isoform>
</comment>
<comment type="disruption phenotype">
    <text evidence="4 5">RNAi-mediated knock-down is mostly embryonic lethal. Embryogenesis proceeds more slowly, with embryos displaying defects in the positioning and shape of epidermal cells. Randomly orientated microtubules are present in epidermal cells during the epidermal elongation process. F-actin accumulation is visible at the leading edge during ventral closure and circumferential actin bundles are present in epidermal cells. Decreased expression of pafo-1, increased cytoplasmic expression of leo-1 and increased nuclear expression of rtfo-1.</text>
</comment>
<gene>
    <name evidence="6" type="primary">ctr-9</name>
    <name evidence="6" type="synonym">tpr-3</name>
    <name evidence="6" type="ORF">B0464.2</name>
</gene>
<sequence length="1150" mass="132345">MDESIDDVQETRTIAIPLKDSHEDEVIEINCSELPDGEEVLQILEAEEAKLSYWIEVALEYYRQDRVDLFMMILESAGSRAGLEYEGVKQDQMRALDILAAYWMTQGYREKAKDKKSDFFSKATVLFNTADKIAMYEWSHLTVRAWFYLFERDKSTNKYELADQQFNYVVKTNPKNVLPLIGKAVIAFNKKDYKTAIYYFRKAIRQCRHTIADLRVGIGHCFAKMGMMDKAKTAFERAMEIEPYNVSAMCGLGIILLNTYDHDSLKHAVSLFGRSYNLQTDHPVALIHLANHFFFKKEIERAWTLAWHAATYNDCDSIKAEAFYQMGRCRHAQGQFDGAYKYYYQARQANNGEHTLAHYGLGQMYIHRNEIEEAIKCFDTVHKRLPNNTDTMKILGSLYAHVQLNDPAQTAEARQKGRDVLGKYLAVENDDYEACIDLAQLLEATDPKRSLELYENAIDLLVTNESIQPQPEMLNNVGALYMSMKQYEKAEHHFKRAKERLEEQLNTDEGSLLLERRSAPEKSHLLTIRYNLALCLEHLCRTVEAEQMYKDIVKECPGYIDGYLRLGCITRDRHQVYESSLWLKQGVQFDQASPIVWTLIGNLHFAKNEWMPAQKKFEFILSKIFNNKIPDPYSLVALGNVWFEQLLNPSRKKEDEKKYIDRALQMYQKALKLQPKNMYAANGIGCVLAYKRNWNDARDVFSQVRESTSEFYDVWLNIAHVCMEREQWMAAVQMYSSAMKKFRKENDSTLQHYLAKAYYRANMLNEAKEALECAMLDQLDNTQLKFNYAIVLKKSAKEVLRGHKMTSEQVTAAIDDLKFADKIFQYISKNDDRQSSHTGMRISRTICAEEAKNCKDLLTQAKHKLAAAQTQDEEERRLMEKQEKEKIALQNKMIEEARAKEEAEKQKLEDMKNLRLSFIEMTKDVLRLPEIVEEKRRGGGGRKRRNDDGDEFVNDSSDAGNYDGEEGGEDGERRERRKKDKAAKKASRKKRERRDSGGPDSNRRDEKKRKRKEERDRKLQEKLSAKQSAKIKSRAFLSSSESSDDDKPKPAADSSDDEVDPRPPVDEFDSPTRTDSDSDRETTTKKKKKKAVVDSDEGSVSGSGSGSDNDDKPIIGGSDDDDDDKPAGGNSRDSDGSDAPKKKVIESDSD</sequence>
<feature type="chain" id="PRO_0000106421" description="RNA polymerase-associated protein CTR9">
    <location>
        <begin position="1"/>
        <end position="1150"/>
    </location>
</feature>
<feature type="repeat" description="TPR 1" evidence="2">
    <location>
        <begin position="143"/>
        <end position="176"/>
    </location>
</feature>
<feature type="repeat" description="TPR 2" evidence="2">
    <location>
        <begin position="177"/>
        <end position="210"/>
    </location>
</feature>
<feature type="repeat" description="TPR 3" evidence="2">
    <location>
        <begin position="212"/>
        <end position="245"/>
    </location>
</feature>
<feature type="repeat" description="TPR 4" evidence="2">
    <location>
        <begin position="247"/>
        <end position="282"/>
    </location>
</feature>
<feature type="repeat" description="TPR 5" evidence="2">
    <location>
        <begin position="320"/>
        <end position="353"/>
    </location>
</feature>
<feature type="repeat" description="TPR 6" evidence="2">
    <location>
        <begin position="355"/>
        <end position="388"/>
    </location>
</feature>
<feature type="repeat" description="TPR 7" evidence="2">
    <location>
        <begin position="432"/>
        <end position="464"/>
    </location>
</feature>
<feature type="repeat" description="TPR 8" evidence="2">
    <location>
        <begin position="471"/>
        <end position="504"/>
    </location>
</feature>
<feature type="repeat" description="TPR 9" evidence="2">
    <location>
        <begin position="594"/>
        <end position="627"/>
    </location>
</feature>
<feature type="repeat" description="TPR 10" evidence="2">
    <location>
        <begin position="643"/>
        <end position="677"/>
    </location>
</feature>
<feature type="repeat" description="TPR 11" evidence="2">
    <location>
        <begin position="679"/>
        <end position="711"/>
    </location>
</feature>
<feature type="repeat" description="TPR 12" evidence="2">
    <location>
        <begin position="712"/>
        <end position="745"/>
    </location>
</feature>
<feature type="repeat" description="TPR 13" evidence="2">
    <location>
        <begin position="748"/>
        <end position="781"/>
    </location>
</feature>
<feature type="region of interest" description="Disordered" evidence="3">
    <location>
        <begin position="935"/>
        <end position="1150"/>
    </location>
</feature>
<feature type="coiled-coil region" evidence="2">
    <location>
        <begin position="848"/>
        <end position="916"/>
    </location>
</feature>
<feature type="coiled-coil region" evidence="2">
    <location>
        <begin position="972"/>
        <end position="1028"/>
    </location>
</feature>
<feature type="compositionally biased region" description="Basic residues" evidence="3">
    <location>
        <begin position="975"/>
        <end position="992"/>
    </location>
</feature>
<feature type="compositionally biased region" description="Basic and acidic residues" evidence="3">
    <location>
        <begin position="993"/>
        <end position="1005"/>
    </location>
</feature>
<feature type="compositionally biased region" description="Basic and acidic residues" evidence="3">
    <location>
        <begin position="1013"/>
        <end position="1024"/>
    </location>
</feature>
<feature type="compositionally biased region" description="Basic and acidic residues" evidence="3">
    <location>
        <begin position="1060"/>
        <end position="1084"/>
    </location>
</feature>
<feature type="compositionally biased region" description="Basic and acidic residues" evidence="3">
    <location>
        <begin position="1132"/>
        <end position="1150"/>
    </location>
</feature>
<feature type="splice variant" id="VSP_057316" description="In isoform d.">
    <original>EVIEINCSELPDGEEVLQILEAEEAKLSYWIEVALEYYRQDRVDLFMMILESAGSRAGLEYEGVKQDQMRALDILAAYWMTQGYREKAKDKKSDFFSKATVLFNTADKIAMYEWSHLTVRAWFYLFERDKSTNKYELADQQFNYVVKTNPKNVLPLIGKAVIAFNKKDYKTAIYYFRKAIRQ</original>
    <variation>GTHLKRLRRFSIEVWNLMQNWATASEKSVQYLESLVNSRLKLLYSREVDVEESAKLTKDQSDRVLNEIVVMNSKLNQTMSDFEKVIGKFEVAQGRMSAWKQLTEKSQNIEEKYIVETLDENLPLIITMLKKELKVKQDVLFDFAQNDSRDVFTLVLLTFKHEPFVDVALLSKLFALVASEAQ</variation>
    <location>
        <begin position="25"/>
        <end position="206"/>
    </location>
</feature>
<feature type="splice variant" id="VSP_057317" description="In isoform d.">
    <location>
        <begin position="207"/>
        <end position="1150"/>
    </location>
</feature>
<accession>Q03560</accession>
<accession>C0P268</accession>
<accession>C0P269</accession>
<accession>C0P270</accession>
<protein>
    <recommendedName>
        <fullName evidence="1">RNA polymerase-associated protein CTR9</fullName>
    </recommendedName>
</protein>
<reference key="1">
    <citation type="journal article" date="1994" name="Nature">
        <title>2.2 Mb of contiguous nucleotide sequence from chromosome III of C. elegans.</title>
        <authorList>
            <person name="Wilson R."/>
            <person name="Ainscough R."/>
            <person name="Anderson K."/>
            <person name="Baynes C."/>
            <person name="Berks M."/>
            <person name="Bonfield J."/>
            <person name="Burton J."/>
            <person name="Connell M."/>
            <person name="Copsey T."/>
            <person name="Cooper J."/>
            <person name="Coulson A."/>
            <person name="Craxton M."/>
            <person name="Dear S."/>
            <person name="Du Z."/>
            <person name="Durbin R."/>
            <person name="Favello A."/>
            <person name="Fraser A."/>
            <person name="Fulton L."/>
            <person name="Gardner A."/>
            <person name="Green P."/>
            <person name="Hawkins T."/>
            <person name="Hillier L."/>
            <person name="Jier M."/>
            <person name="Johnston L."/>
            <person name="Jones M."/>
            <person name="Kershaw J."/>
            <person name="Kirsten J."/>
            <person name="Laisster N."/>
            <person name="Latreille P."/>
            <person name="Lightning J."/>
            <person name="Lloyd C."/>
            <person name="Mortimore B."/>
            <person name="O'Callaghan M."/>
            <person name="Parsons J."/>
            <person name="Percy C."/>
            <person name="Rifken L."/>
            <person name="Roopra A."/>
            <person name="Saunders D."/>
            <person name="Shownkeen R."/>
            <person name="Sims M."/>
            <person name="Smaldon N."/>
            <person name="Smith A."/>
            <person name="Smith M."/>
            <person name="Sonnhammer E."/>
            <person name="Staden R."/>
            <person name="Sulston J."/>
            <person name="Thierry-Mieg J."/>
            <person name="Thomas K."/>
            <person name="Vaudin M."/>
            <person name="Vaughan K."/>
            <person name="Waterston R."/>
            <person name="Watson A."/>
            <person name="Weinstock L."/>
            <person name="Wilkinson-Sproat J."/>
            <person name="Wohldman P."/>
        </authorList>
    </citation>
    <scope>NUCLEOTIDE SEQUENCE [LARGE SCALE GENOMIC DNA]</scope>
    <source>
        <strain>Bristol N2</strain>
    </source>
</reference>
<reference key="2">
    <citation type="journal article" date="1998" name="Science">
        <title>Genome sequence of the nematode C. elegans: a platform for investigating biology.</title>
        <authorList>
            <consortium name="The C. elegans sequencing consortium"/>
        </authorList>
    </citation>
    <scope>NUCLEOTIDE SEQUENCE [LARGE SCALE GENOMIC DNA]</scope>
    <source>
        <strain>Bristol N2</strain>
    </source>
</reference>
<reference key="3">
    <citation type="journal article" date="2014" name="Dev. Biol.">
        <title>The PAF1 complex is involved in embryonic epidermal morphogenesis in Caenorhabditis elegans.</title>
        <authorList>
            <person name="Kubota Y."/>
            <person name="Tsuyama K."/>
            <person name="Takabayashi Y."/>
            <person name="Haruta N."/>
            <person name="Maruyama R."/>
            <person name="Iida N."/>
            <person name="Sugimoto A."/>
        </authorList>
    </citation>
    <scope>FUNCTION</scope>
    <scope>SUBCELLULAR LOCATION</scope>
    <scope>DISRUPTION PHENOTYPE</scope>
</reference>
<organism>
    <name type="scientific">Caenorhabditis elegans</name>
    <dbReference type="NCBI Taxonomy" id="6239"/>
    <lineage>
        <taxon>Eukaryota</taxon>
        <taxon>Metazoa</taxon>
        <taxon>Ecdysozoa</taxon>
        <taxon>Nematoda</taxon>
        <taxon>Chromadorea</taxon>
        <taxon>Rhabditida</taxon>
        <taxon>Rhabditina</taxon>
        <taxon>Rhabditomorpha</taxon>
        <taxon>Rhabditoidea</taxon>
        <taxon>Rhabditidae</taxon>
        <taxon>Peloderinae</taxon>
        <taxon>Caenorhabditis</taxon>
    </lineage>
</organism>
<dbReference type="EMBL" id="BX284603">
    <property type="protein sequence ID" value="CAA79544.1"/>
    <property type="molecule type" value="Genomic_DNA"/>
</dbReference>
<dbReference type="EMBL" id="BX284603">
    <property type="protein sequence ID" value="CAX51623.1"/>
    <property type="molecule type" value="Genomic_DNA"/>
</dbReference>
<dbReference type="PIR" id="D88556">
    <property type="entry name" value="D88556"/>
</dbReference>
<dbReference type="PIR" id="S28279">
    <property type="entry name" value="S28279"/>
</dbReference>
<dbReference type="RefSeq" id="NP_001255000.1">
    <molecule id="Q03560-1"/>
    <property type="nucleotide sequence ID" value="NM_001268071.4"/>
</dbReference>
<dbReference type="RefSeq" id="NP_001255001.1">
    <molecule id="Q03560-4"/>
    <property type="nucleotide sequence ID" value="NM_001268072.4"/>
</dbReference>
<dbReference type="SMR" id="Q03560"/>
<dbReference type="BioGRID" id="41532">
    <property type="interactions" value="5"/>
</dbReference>
<dbReference type="ComplexPortal" id="CPX-966">
    <property type="entry name" value="PAF1 complex"/>
</dbReference>
<dbReference type="FunCoup" id="Q03560">
    <property type="interactions" value="3148"/>
</dbReference>
<dbReference type="STRING" id="6239.B0464.2a.1"/>
<dbReference type="iPTMnet" id="Q03560"/>
<dbReference type="PaxDb" id="6239-B0464.2c"/>
<dbReference type="PeptideAtlas" id="Q03560"/>
<dbReference type="EnsemblMetazoa" id="B0464.2a.1">
    <molecule id="Q03560-1"/>
    <property type="protein sequence ID" value="B0464.2a.1"/>
    <property type="gene ID" value="WBGene00007184"/>
</dbReference>
<dbReference type="EnsemblMetazoa" id="B0464.2a.2">
    <molecule id="Q03560-1"/>
    <property type="protein sequence ID" value="B0464.2a.2"/>
    <property type="gene ID" value="WBGene00007184"/>
</dbReference>
<dbReference type="EnsemblMetazoa" id="B0464.2d.1">
    <molecule id="Q03560-4"/>
    <property type="protein sequence ID" value="B0464.2d.1"/>
    <property type="gene ID" value="WBGene00007184"/>
</dbReference>
<dbReference type="EnsemblMetazoa" id="B0464.2d.2">
    <molecule id="Q03560-4"/>
    <property type="protein sequence ID" value="B0464.2d.2"/>
    <property type="gene ID" value="WBGene00007184"/>
</dbReference>
<dbReference type="GeneID" id="176335"/>
<dbReference type="KEGG" id="cel:CELE_B0464.2"/>
<dbReference type="UCSC" id="B0464.2">
    <molecule id="Q03560-1"/>
    <property type="organism name" value="c. elegans"/>
</dbReference>
<dbReference type="AGR" id="WB:WBGene00007184"/>
<dbReference type="CTD" id="176335"/>
<dbReference type="WormBase" id="B0464.2a">
    <molecule id="Q03560-1"/>
    <property type="protein sequence ID" value="CE20456"/>
    <property type="gene ID" value="WBGene00007184"/>
    <property type="gene designation" value="ctr-9"/>
</dbReference>
<dbReference type="WormBase" id="B0464.2d">
    <molecule id="Q03560-4"/>
    <property type="protein sequence ID" value="CE43518"/>
    <property type="gene ID" value="WBGene00007184"/>
    <property type="gene designation" value="ctr-9"/>
</dbReference>
<dbReference type="eggNOG" id="KOG2002">
    <property type="taxonomic scope" value="Eukaryota"/>
</dbReference>
<dbReference type="GeneTree" id="ENSGT00390000005097"/>
<dbReference type="HOGENOM" id="CLU_006386_0_0_1"/>
<dbReference type="InParanoid" id="Q03560"/>
<dbReference type="OMA" id="EHWLTIA"/>
<dbReference type="OrthoDB" id="343875at2759"/>
<dbReference type="PhylomeDB" id="Q03560"/>
<dbReference type="Reactome" id="R-CEL-112382">
    <property type="pathway name" value="Formation of RNA Pol II elongation complex"/>
</dbReference>
<dbReference type="Reactome" id="R-CEL-674695">
    <property type="pathway name" value="RNA Polymerase II Pre-transcription Events"/>
</dbReference>
<dbReference type="Reactome" id="R-CEL-75955">
    <property type="pathway name" value="RNA Polymerase II Transcription Elongation"/>
</dbReference>
<dbReference type="PRO" id="PR:Q03560"/>
<dbReference type="Proteomes" id="UP000001940">
    <property type="component" value="Chromosome III"/>
</dbReference>
<dbReference type="Bgee" id="WBGene00007184">
    <property type="expression patterns" value="Expressed in embryo and 4 other cell types or tissues"/>
</dbReference>
<dbReference type="GO" id="GO:0016593">
    <property type="term" value="C:Cdc73/Paf1 complex"/>
    <property type="evidence" value="ECO:0000318"/>
    <property type="project" value="GO_Central"/>
</dbReference>
<dbReference type="GO" id="GO:0005634">
    <property type="term" value="C:nucleus"/>
    <property type="evidence" value="ECO:0000303"/>
    <property type="project" value="ComplexPortal"/>
</dbReference>
<dbReference type="GO" id="GO:0000993">
    <property type="term" value="F:RNA polymerase II complex binding"/>
    <property type="evidence" value="ECO:0000318"/>
    <property type="project" value="GO_Central"/>
</dbReference>
<dbReference type="GO" id="GO:0006355">
    <property type="term" value="P:regulation of DNA-templated transcription"/>
    <property type="evidence" value="ECO:0007669"/>
    <property type="project" value="InterPro"/>
</dbReference>
<dbReference type="GO" id="GO:0006368">
    <property type="term" value="P:transcription elongation by RNA polymerase II"/>
    <property type="evidence" value="ECO:0000318"/>
    <property type="project" value="GO_Central"/>
</dbReference>
<dbReference type="FunFam" id="1.25.40.10:FF:001926">
    <property type="entry name" value="RNA polymerase-associated protein CTR9"/>
    <property type="match status" value="1"/>
</dbReference>
<dbReference type="FunFam" id="1.25.40.10:FF:002967">
    <property type="entry name" value="RNA polymerase-associated protein CTR9"/>
    <property type="match status" value="1"/>
</dbReference>
<dbReference type="Gene3D" id="1.25.40.10">
    <property type="entry name" value="Tetratricopeptide repeat domain"/>
    <property type="match status" value="3"/>
</dbReference>
<dbReference type="InterPro" id="IPR031101">
    <property type="entry name" value="Ctr9"/>
</dbReference>
<dbReference type="InterPro" id="IPR011990">
    <property type="entry name" value="TPR-like_helical_dom_sf"/>
</dbReference>
<dbReference type="InterPro" id="IPR019734">
    <property type="entry name" value="TPR_rpt"/>
</dbReference>
<dbReference type="PANTHER" id="PTHR14027">
    <property type="entry name" value="RNA POLYMERASE-ASSOCIATED PROTEIN CTR9"/>
    <property type="match status" value="1"/>
</dbReference>
<dbReference type="PANTHER" id="PTHR14027:SF2">
    <property type="entry name" value="RNA POLYMERASE-ASSOCIATED PROTEIN CTR9 HOMOLOG"/>
    <property type="match status" value="1"/>
</dbReference>
<dbReference type="Pfam" id="PF14559">
    <property type="entry name" value="TPR_19"/>
    <property type="match status" value="1"/>
</dbReference>
<dbReference type="Pfam" id="PF13181">
    <property type="entry name" value="TPR_8"/>
    <property type="match status" value="2"/>
</dbReference>
<dbReference type="SMART" id="SM00028">
    <property type="entry name" value="TPR"/>
    <property type="match status" value="10"/>
</dbReference>
<dbReference type="SUPFAM" id="SSF48452">
    <property type="entry name" value="TPR-like"/>
    <property type="match status" value="3"/>
</dbReference>
<dbReference type="PROSITE" id="PS50005">
    <property type="entry name" value="TPR"/>
    <property type="match status" value="9"/>
</dbReference>
<dbReference type="PROSITE" id="PS50293">
    <property type="entry name" value="TPR_REGION"/>
    <property type="match status" value="1"/>
</dbReference>
<proteinExistence type="inferred from homology"/>
<evidence type="ECO:0000250" key="1">
    <source>
        <dbReference type="UniProtKB" id="P89105"/>
    </source>
</evidence>
<evidence type="ECO:0000255" key="2"/>
<evidence type="ECO:0000256" key="3">
    <source>
        <dbReference type="SAM" id="MobiDB-lite"/>
    </source>
</evidence>
<evidence type="ECO:0000269" key="4">
    <source>
    </source>
</evidence>
<evidence type="ECO:0000303" key="5">
    <source>
    </source>
</evidence>
<evidence type="ECO:0000312" key="6">
    <source>
        <dbReference type="WormBase" id="B0464.2a"/>
    </source>
</evidence>
<evidence type="ECO:0000312" key="7">
    <source>
        <dbReference type="WormBase" id="B0464.2d"/>
    </source>
</evidence>
<name>CTR9_CAEEL</name>